<sequence length="71" mass="8001">MSTKKTFEERLQELEAIVTRLENGDVPLEEAISEFQKGMVLSKDLQKTLQSAEKTLVKVMQADGTELEMDA</sequence>
<accession>C0MD33</accession>
<gene>
    <name evidence="1" type="primary">xseB</name>
    <name type="ordered locus">SZO_13780</name>
</gene>
<keyword id="KW-0963">Cytoplasm</keyword>
<keyword id="KW-0269">Exonuclease</keyword>
<keyword id="KW-0378">Hydrolase</keyword>
<keyword id="KW-0540">Nuclease</keyword>
<evidence type="ECO:0000255" key="1">
    <source>
        <dbReference type="HAMAP-Rule" id="MF_00337"/>
    </source>
</evidence>
<protein>
    <recommendedName>
        <fullName evidence="1">Exodeoxyribonuclease 7 small subunit</fullName>
        <ecNumber evidence="1">3.1.11.6</ecNumber>
    </recommendedName>
    <alternativeName>
        <fullName evidence="1">Exodeoxyribonuclease VII small subunit</fullName>
        <shortName evidence="1">Exonuclease VII small subunit</shortName>
    </alternativeName>
</protein>
<dbReference type="EC" id="3.1.11.6" evidence="1"/>
<dbReference type="EMBL" id="FM204884">
    <property type="protein sequence ID" value="CAW99958.1"/>
    <property type="molecule type" value="Genomic_DNA"/>
</dbReference>
<dbReference type="SMR" id="C0MD33"/>
<dbReference type="KEGG" id="seq:SZO_13780"/>
<dbReference type="eggNOG" id="COG1722">
    <property type="taxonomic scope" value="Bacteria"/>
</dbReference>
<dbReference type="HOGENOM" id="CLU_145918_3_2_9"/>
<dbReference type="Proteomes" id="UP000001368">
    <property type="component" value="Chromosome"/>
</dbReference>
<dbReference type="GO" id="GO:0005829">
    <property type="term" value="C:cytosol"/>
    <property type="evidence" value="ECO:0007669"/>
    <property type="project" value="TreeGrafter"/>
</dbReference>
<dbReference type="GO" id="GO:0009318">
    <property type="term" value="C:exodeoxyribonuclease VII complex"/>
    <property type="evidence" value="ECO:0007669"/>
    <property type="project" value="InterPro"/>
</dbReference>
<dbReference type="GO" id="GO:0008855">
    <property type="term" value="F:exodeoxyribonuclease VII activity"/>
    <property type="evidence" value="ECO:0007669"/>
    <property type="project" value="UniProtKB-UniRule"/>
</dbReference>
<dbReference type="GO" id="GO:0006308">
    <property type="term" value="P:DNA catabolic process"/>
    <property type="evidence" value="ECO:0007669"/>
    <property type="project" value="UniProtKB-UniRule"/>
</dbReference>
<dbReference type="Gene3D" id="1.10.287.1040">
    <property type="entry name" value="Exonuclease VII, small subunit"/>
    <property type="match status" value="1"/>
</dbReference>
<dbReference type="HAMAP" id="MF_00337">
    <property type="entry name" value="Exonuc_7_S"/>
    <property type="match status" value="1"/>
</dbReference>
<dbReference type="InterPro" id="IPR003761">
    <property type="entry name" value="Exonuc_VII_S"/>
</dbReference>
<dbReference type="InterPro" id="IPR037004">
    <property type="entry name" value="Exonuc_VII_ssu_sf"/>
</dbReference>
<dbReference type="NCBIfam" id="NF002138">
    <property type="entry name" value="PRK00977.1-2"/>
    <property type="match status" value="1"/>
</dbReference>
<dbReference type="NCBIfam" id="TIGR01280">
    <property type="entry name" value="xseB"/>
    <property type="match status" value="1"/>
</dbReference>
<dbReference type="PANTHER" id="PTHR34137">
    <property type="entry name" value="EXODEOXYRIBONUCLEASE 7 SMALL SUBUNIT"/>
    <property type="match status" value="1"/>
</dbReference>
<dbReference type="PANTHER" id="PTHR34137:SF1">
    <property type="entry name" value="EXODEOXYRIBONUCLEASE 7 SMALL SUBUNIT"/>
    <property type="match status" value="1"/>
</dbReference>
<dbReference type="Pfam" id="PF02609">
    <property type="entry name" value="Exonuc_VII_S"/>
    <property type="match status" value="1"/>
</dbReference>
<dbReference type="PIRSF" id="PIRSF006488">
    <property type="entry name" value="Exonuc_VII_S"/>
    <property type="match status" value="1"/>
</dbReference>
<dbReference type="SUPFAM" id="SSF116842">
    <property type="entry name" value="XseB-like"/>
    <property type="match status" value="1"/>
</dbReference>
<feature type="chain" id="PRO_1000205235" description="Exodeoxyribonuclease 7 small subunit">
    <location>
        <begin position="1"/>
        <end position="71"/>
    </location>
</feature>
<reference key="1">
    <citation type="journal article" date="2009" name="PLoS Pathog.">
        <title>Genomic evidence for the evolution of Streptococcus equi: host restriction, increased virulence, and genetic exchange with human pathogens.</title>
        <authorList>
            <person name="Holden M.T.G."/>
            <person name="Heather Z."/>
            <person name="Paillot R."/>
            <person name="Steward K.F."/>
            <person name="Webb K."/>
            <person name="Ainslie F."/>
            <person name="Jourdan T."/>
            <person name="Bason N.C."/>
            <person name="Holroyd N.E."/>
            <person name="Mungall K."/>
            <person name="Quail M.A."/>
            <person name="Sanders M."/>
            <person name="Simmonds M."/>
            <person name="Willey D."/>
            <person name="Brooks K."/>
            <person name="Aanensen D.M."/>
            <person name="Spratt B.G."/>
            <person name="Jolley K.A."/>
            <person name="Maiden M.C.J."/>
            <person name="Kehoe M."/>
            <person name="Chanter N."/>
            <person name="Bentley S.D."/>
            <person name="Robinson C."/>
            <person name="Maskell D.J."/>
            <person name="Parkhill J."/>
            <person name="Waller A.S."/>
        </authorList>
    </citation>
    <scope>NUCLEOTIDE SEQUENCE [LARGE SCALE GENOMIC DNA]</scope>
    <source>
        <strain>H70</strain>
    </source>
</reference>
<name>EX7S_STRS7</name>
<proteinExistence type="inferred from homology"/>
<organism>
    <name type="scientific">Streptococcus equi subsp. zooepidemicus (strain H70)</name>
    <dbReference type="NCBI Taxonomy" id="553483"/>
    <lineage>
        <taxon>Bacteria</taxon>
        <taxon>Bacillati</taxon>
        <taxon>Bacillota</taxon>
        <taxon>Bacilli</taxon>
        <taxon>Lactobacillales</taxon>
        <taxon>Streptococcaceae</taxon>
        <taxon>Streptococcus</taxon>
    </lineage>
</organism>
<comment type="function">
    <text evidence="1">Bidirectionally degrades single-stranded DNA into large acid-insoluble oligonucleotides, which are then degraded further into small acid-soluble oligonucleotides.</text>
</comment>
<comment type="catalytic activity">
    <reaction evidence="1">
        <text>Exonucleolytic cleavage in either 5'- to 3'- or 3'- to 5'-direction to yield nucleoside 5'-phosphates.</text>
        <dbReference type="EC" id="3.1.11.6"/>
    </reaction>
</comment>
<comment type="subunit">
    <text evidence="1">Heterooligomer composed of large and small subunits.</text>
</comment>
<comment type="subcellular location">
    <subcellularLocation>
        <location evidence="1">Cytoplasm</location>
    </subcellularLocation>
</comment>
<comment type="similarity">
    <text evidence="1">Belongs to the XseB family.</text>
</comment>